<geneLocation type="chloroplast"/>
<organism>
    <name type="scientific">Staurastrum punctulatum</name>
    <name type="common">Green alga</name>
    <name type="synonym">Cosmoastrum punctulatum</name>
    <dbReference type="NCBI Taxonomy" id="102822"/>
    <lineage>
        <taxon>Eukaryota</taxon>
        <taxon>Viridiplantae</taxon>
        <taxon>Streptophyta</taxon>
        <taxon>Zygnematophyceae</taxon>
        <taxon>Zygnematophycidae</taxon>
        <taxon>Desmidiales</taxon>
        <taxon>Desmidiaceae</taxon>
        <taxon>Staurastrum</taxon>
    </lineage>
</organism>
<dbReference type="EMBL" id="AY958085">
    <property type="protein sequence ID" value="AAX45685.1"/>
    <property type="molecule type" value="Genomic_DNA"/>
</dbReference>
<dbReference type="RefSeq" id="YP_636449.1">
    <property type="nucleotide sequence ID" value="NC_008116.1"/>
</dbReference>
<dbReference type="SMR" id="Q32RS7"/>
<dbReference type="GeneID" id="4108644"/>
<dbReference type="GO" id="GO:0009535">
    <property type="term" value="C:chloroplast thylakoid membrane"/>
    <property type="evidence" value="ECO:0007669"/>
    <property type="project" value="UniProtKB-SubCell"/>
</dbReference>
<dbReference type="GO" id="GO:0045259">
    <property type="term" value="C:proton-transporting ATP synthase complex"/>
    <property type="evidence" value="ECO:0007669"/>
    <property type="project" value="UniProtKB-KW"/>
</dbReference>
<dbReference type="GO" id="GO:0046933">
    <property type="term" value="F:proton-transporting ATP synthase activity, rotational mechanism"/>
    <property type="evidence" value="ECO:0007669"/>
    <property type="project" value="UniProtKB-UniRule"/>
</dbReference>
<dbReference type="CDD" id="cd06503">
    <property type="entry name" value="ATP-synt_Fo_b"/>
    <property type="match status" value="1"/>
</dbReference>
<dbReference type="HAMAP" id="MF_01398">
    <property type="entry name" value="ATP_synth_b_bprime"/>
    <property type="match status" value="1"/>
</dbReference>
<dbReference type="InterPro" id="IPR002146">
    <property type="entry name" value="ATP_synth_b/b'su_bac/chlpt"/>
</dbReference>
<dbReference type="NCBIfam" id="NF005606">
    <property type="entry name" value="PRK07352.1"/>
    <property type="match status" value="1"/>
</dbReference>
<dbReference type="PANTHER" id="PTHR34264">
    <property type="entry name" value="ATP SYNTHASE SUBUNIT B, CHLOROPLASTIC"/>
    <property type="match status" value="1"/>
</dbReference>
<dbReference type="PANTHER" id="PTHR34264:SF3">
    <property type="entry name" value="ATP SYNTHASE SUBUNIT B, CHLOROPLASTIC"/>
    <property type="match status" value="1"/>
</dbReference>
<dbReference type="Pfam" id="PF00430">
    <property type="entry name" value="ATP-synt_B"/>
    <property type="match status" value="1"/>
</dbReference>
<protein>
    <recommendedName>
        <fullName evidence="1">ATP synthase subunit b, chloroplastic</fullName>
    </recommendedName>
    <alternativeName>
        <fullName evidence="1">ATP synthase F(0) sector subunit b</fullName>
    </alternativeName>
    <alternativeName>
        <fullName evidence="1">ATPase subunit I</fullName>
    </alternativeName>
</protein>
<proteinExistence type="inferred from homology"/>
<reference key="1">
    <citation type="journal article" date="2005" name="BMC Biol.">
        <title>The complete chloroplast DNA sequences of the charophycean green algae Staurastrum and Zygnema reveal that the chloroplast genome underwent extensive changes during the evolution of the Zygnematales.</title>
        <authorList>
            <person name="Turmel M."/>
            <person name="Otis C."/>
            <person name="Lemieux C."/>
        </authorList>
    </citation>
    <scope>NUCLEOTIDE SEQUENCE [LARGE SCALE GENOMIC DNA]</scope>
</reference>
<name>ATPF_STAPU</name>
<sequence>MNSETYWIISSNNWDLAESFGFNTNILETNLINLAVVIGVLVYFGKGVLTTILNNRKETILSTIRDAEERYQEAIEKLNQARTQLEQAKAKAEEIRVNGVLQMEREKQELIKAADEDSKRLEETKNLTIRFAEQKAIVQIRQQISRLTVKRALEIINSRLNLDLHARMIDYHIGLFKAMKTSAE</sequence>
<evidence type="ECO:0000255" key="1">
    <source>
        <dbReference type="HAMAP-Rule" id="MF_01398"/>
    </source>
</evidence>
<gene>
    <name evidence="1" type="primary">atpF</name>
</gene>
<feature type="chain" id="PRO_0000368981" description="ATP synthase subunit b, chloroplastic">
    <location>
        <begin position="1"/>
        <end position="184"/>
    </location>
</feature>
<feature type="transmembrane region" description="Helical" evidence="1">
    <location>
        <begin position="31"/>
        <end position="53"/>
    </location>
</feature>
<keyword id="KW-0066">ATP synthesis</keyword>
<keyword id="KW-0138">CF(0)</keyword>
<keyword id="KW-0150">Chloroplast</keyword>
<keyword id="KW-0375">Hydrogen ion transport</keyword>
<keyword id="KW-0406">Ion transport</keyword>
<keyword id="KW-0472">Membrane</keyword>
<keyword id="KW-0934">Plastid</keyword>
<keyword id="KW-0793">Thylakoid</keyword>
<keyword id="KW-0812">Transmembrane</keyword>
<keyword id="KW-1133">Transmembrane helix</keyword>
<keyword id="KW-0813">Transport</keyword>
<accession>Q32RS7</accession>
<comment type="function">
    <text evidence="1">F(1)F(0) ATP synthase produces ATP from ADP in the presence of a proton or sodium gradient. F-type ATPases consist of two structural domains, F(1) containing the extramembraneous catalytic core and F(0) containing the membrane proton channel, linked together by a central stalk and a peripheral stalk. During catalysis, ATP synthesis in the catalytic domain of F(1) is coupled via a rotary mechanism of the central stalk subunits to proton translocation.</text>
</comment>
<comment type="function">
    <text evidence="1">Component of the F(0) channel, it forms part of the peripheral stalk, linking F(1) to F(0).</text>
</comment>
<comment type="subunit">
    <text evidence="1">F-type ATPases have 2 components, F(1) - the catalytic core - and F(0) - the membrane proton channel. F(1) has five subunits: alpha(3), beta(3), gamma(1), delta(1), epsilon(1). F(0) has four main subunits: a(1), b(1), b'(1) and c(10-14). The alpha and beta chains form an alternating ring which encloses part of the gamma chain. F(1) is attached to F(0) by a central stalk formed by the gamma and epsilon chains, while a peripheral stalk is formed by the delta, b and b' chains.</text>
</comment>
<comment type="subcellular location">
    <subcellularLocation>
        <location evidence="1">Plastid</location>
        <location evidence="1">Chloroplast thylakoid membrane</location>
        <topology evidence="1">Single-pass membrane protein</topology>
    </subcellularLocation>
</comment>
<comment type="miscellaneous">
    <text>In plastids the F-type ATPase is also known as CF(1)CF(0).</text>
</comment>
<comment type="similarity">
    <text evidence="1">Belongs to the ATPase B chain family.</text>
</comment>